<protein>
    <recommendedName>
        <fullName evidence="4">O-methyltransferase cnsE</fullName>
        <ecNumber evidence="2">2.1.1.-</ecNumber>
    </recommendedName>
    <alternativeName>
        <fullName evidence="4">Communesin biosynthesis cluster protein E</fullName>
    </alternativeName>
</protein>
<feature type="chain" id="PRO_0000446460" description="O-methyltransferase cnsE">
    <location>
        <begin position="1"/>
        <end position="276"/>
    </location>
</feature>
<feature type="binding site" evidence="1">
    <location>
        <position position="110"/>
    </location>
    <ligand>
        <name>S-adenosyl-L-methionine</name>
        <dbReference type="ChEBI" id="CHEBI:59789"/>
    </ligand>
</feature>
<feature type="binding site" evidence="1">
    <location>
        <begin position="133"/>
        <end position="134"/>
    </location>
    <ligand>
        <name>S-adenosyl-L-methionine</name>
        <dbReference type="ChEBI" id="CHEBI:59789"/>
    </ligand>
</feature>
<feature type="binding site" evidence="1">
    <location>
        <position position="155"/>
    </location>
    <ligand>
        <name>S-adenosyl-L-methionine</name>
        <dbReference type="ChEBI" id="CHEBI:59789"/>
    </ligand>
</feature>
<sequence length="276" mass="29984">MASETENLRAIALDPSHPTPTDVGEIYDETSDSLTDMLGGYIHVGYWEDPSKQETAEVVGDRLTREVGVRLSPAQGEHILDVGCGTGKSTAQLAGIYDAQVTGITISKQQVEVARSQYGRKMPAGQVHFQFADAMDLPFGDASFDGAYAIESLVHMLDKRTALAQIAQVLRPGSRLVIADLVSDHPCPDSPVLARYAEIFEPPLVSADDLQNLLRQAGFKVIDVTDIRENIRPSCKLFETKGLSLGGELGQKLLEIASILEEMNELGYALITAERL</sequence>
<keyword id="KW-0489">Methyltransferase</keyword>
<keyword id="KW-1185">Reference proteome</keyword>
<keyword id="KW-0949">S-adenosyl-L-methionine</keyword>
<keyword id="KW-0808">Transferase</keyword>
<evidence type="ECO:0000250" key="1">
    <source>
        <dbReference type="UniProtKB" id="Q8KZ94"/>
    </source>
</evidence>
<evidence type="ECO:0000269" key="2">
    <source>
    </source>
</evidence>
<evidence type="ECO:0000269" key="3">
    <source>
    </source>
</evidence>
<evidence type="ECO:0000303" key="4">
    <source>
    </source>
</evidence>
<evidence type="ECO:0000305" key="5"/>
<evidence type="ECO:0000305" key="6">
    <source>
    </source>
</evidence>
<dbReference type="EC" id="2.1.1.-" evidence="2"/>
<dbReference type="EMBL" id="JQFZ01000090">
    <property type="protein sequence ID" value="KGO59698.1"/>
    <property type="molecule type" value="Genomic_DNA"/>
</dbReference>
<dbReference type="RefSeq" id="XP_016600811.1">
    <property type="nucleotide sequence ID" value="XM_016742813.1"/>
</dbReference>
<dbReference type="SMR" id="A0A0A2IBN3"/>
<dbReference type="STRING" id="27334.A0A0A2IBN3"/>
<dbReference type="GeneID" id="27678232"/>
<dbReference type="VEuPathDB" id="FungiDB:PEXP_030500"/>
<dbReference type="HOGENOM" id="CLU_039068_6_0_1"/>
<dbReference type="OrthoDB" id="10017101at2759"/>
<dbReference type="PhylomeDB" id="A0A0A2IBN3"/>
<dbReference type="Proteomes" id="UP000030143">
    <property type="component" value="Unassembled WGS sequence"/>
</dbReference>
<dbReference type="GO" id="GO:0008757">
    <property type="term" value="F:S-adenosylmethionine-dependent methyltransferase activity"/>
    <property type="evidence" value="ECO:0007669"/>
    <property type="project" value="InterPro"/>
</dbReference>
<dbReference type="GO" id="GO:0032259">
    <property type="term" value="P:methylation"/>
    <property type="evidence" value="ECO:0007669"/>
    <property type="project" value="UniProtKB-KW"/>
</dbReference>
<dbReference type="CDD" id="cd02440">
    <property type="entry name" value="AdoMet_MTases"/>
    <property type="match status" value="1"/>
</dbReference>
<dbReference type="Gene3D" id="3.40.50.150">
    <property type="entry name" value="Vaccinia Virus protein VP39"/>
    <property type="match status" value="1"/>
</dbReference>
<dbReference type="InterPro" id="IPR050447">
    <property type="entry name" value="Erg6_SMT_methyltransf"/>
</dbReference>
<dbReference type="InterPro" id="IPR020803">
    <property type="entry name" value="MeTfrase_dom"/>
</dbReference>
<dbReference type="InterPro" id="IPR013216">
    <property type="entry name" value="Methyltransf_11"/>
</dbReference>
<dbReference type="InterPro" id="IPR029063">
    <property type="entry name" value="SAM-dependent_MTases_sf"/>
</dbReference>
<dbReference type="PANTHER" id="PTHR44068:SF11">
    <property type="entry name" value="GERANYL DIPHOSPHATE 2-C-METHYLTRANSFERASE"/>
    <property type="match status" value="1"/>
</dbReference>
<dbReference type="PANTHER" id="PTHR44068">
    <property type="entry name" value="ZGC:194242"/>
    <property type="match status" value="1"/>
</dbReference>
<dbReference type="Pfam" id="PF08241">
    <property type="entry name" value="Methyltransf_11"/>
    <property type="match status" value="1"/>
</dbReference>
<dbReference type="SMART" id="SM00828">
    <property type="entry name" value="PKS_MT"/>
    <property type="match status" value="1"/>
</dbReference>
<dbReference type="SUPFAM" id="SSF53335">
    <property type="entry name" value="S-adenosyl-L-methionine-dependent methyltransferases"/>
    <property type="match status" value="1"/>
</dbReference>
<comment type="function">
    <text evidence="2 3">O-methyltransferase; part of the gene cluster that mediates the biosynthesis of communesins, a prominent class of indole alkaloids with great potential as pharmaceuticals (PubMed:25571861). Communesins are biosynthesized by the coupling of tryptamine and aurantioclavine, two building blocks derived from L-tryptophan (PubMed:25571861). The L-tryptophan decarboxylase cnsB converts L-tryptophan to tryptamine, whereas the tryptophan dimethylallyltransferase cnsF converts L-tryptophan to 4-dimethylallyl tryptophan which is further transformed to aurantioclavine by the aurantioclavine synthase cnsA, probably aided by the catalase cnsD (PubMed:25571861). The cytochrome P450 monooxygenase cnsC catalyzes the heterodimeric coupling between the two different indole moieties, tryptamine and aurantioclavine, to construct vicinal quaternary stereocenters and yield the heptacyclic communesin scaffold (PubMed:26963294). The O-methyltransferase cnsE then methylates the communesin scaffold to produce communesin K, the simplest characterized communesin that contains the heptacyclic core (PubMed:25571861). The dioxygenase cnsJ converts communesin K into communesin I (PubMed:25571861). Acylation to introduce the hexadienyl group at position N16 of communesin I by the acyltransferase cnsK leads to the production of communesin B. The hexadienyl group is produced by the highly reducing polyketide synthase cnsI, before being hydrolytically removed from cnsI by the serine hydrolase cnsH, converted into hexadienyl-CoA by the CoA ligase cnsG, and then transferred to communesin I by cnsK (PubMed:25571861). Surprisingly, cnsK may also be a promiscuous acyltransferase that can tolerate a range of acyl groups, including acetyl-, propionyl-, and butyryl-CoA, which lead to communesins A, G and H respectively (PubMed:25571861). The roles of the alpha-ketoglutarate-dependent dioxygenases cnsM and cnsP have still to be determined (PubMed:25571861).</text>
</comment>
<comment type="cofactor">
    <cofactor evidence="1">
        <name>S-adenosyl-L-methionine</name>
        <dbReference type="ChEBI" id="CHEBI:59789"/>
    </cofactor>
</comment>
<comment type="pathway">
    <text evidence="6">Alkaloid biosynthesis.</text>
</comment>
<comment type="disruption phenotype">
    <text evidence="2">Abolishes the biosynthesis of communesins A and B and leads to the accumulation of desmethyl versions of communesins A and B, including communesin C.</text>
</comment>
<comment type="similarity">
    <text evidence="5">Belongs to the methyltransferase superfamily.</text>
</comment>
<name>CNSE_PENEN</name>
<reference key="1">
    <citation type="journal article" date="2015" name="Mol. Plant Microbe Interact.">
        <title>Genome, transcriptome, and functional analyses of Penicillium expansum provide new insights into secondary metabolism and pathogenicity.</title>
        <authorList>
            <person name="Ballester A.R."/>
            <person name="Marcet-Houben M."/>
            <person name="Levin E."/>
            <person name="Sela N."/>
            <person name="Selma-Lazaro C."/>
            <person name="Carmona L."/>
            <person name="Wisniewski M."/>
            <person name="Droby S."/>
            <person name="Gonzalez-Candelas L."/>
            <person name="Gabaldon T."/>
        </authorList>
    </citation>
    <scope>NUCLEOTIDE SEQUENCE [LARGE SCALE GENOMIC DNA]</scope>
    <source>
        <strain>MD-8</strain>
    </source>
</reference>
<reference key="2">
    <citation type="journal article" date="2015" name="Angew. Chem. Int. Ed.">
        <title>Elucidation of the concise biosynthetic pathway of the communesin indole alkaloids.</title>
        <authorList>
            <person name="Lin H.C."/>
            <person name="Chiou G."/>
            <person name="Chooi Y.H."/>
            <person name="McMahon T.C."/>
            <person name="Xu W."/>
            <person name="Garg N.K."/>
            <person name="Tang Y."/>
        </authorList>
    </citation>
    <scope>IDENTIFICATION</scope>
    <scope>FUNCTION</scope>
    <scope>DISRUPTION PHENOTYPE</scope>
    <scope>CATALYTIC ACTIVITY</scope>
    <scope>PATHWAY</scope>
</reference>
<reference key="3">
    <citation type="journal article" date="2016" name="J. Am. Chem. Soc.">
        <title>P450-mediated coupling of indole fragments to forge communesin and unnatural isomers.</title>
        <authorList>
            <person name="Lin H.C."/>
            <person name="McMahon T.C."/>
            <person name="Patel A."/>
            <person name="Corsello M."/>
            <person name="Simon A."/>
            <person name="Xu W."/>
            <person name="Zhao M."/>
            <person name="Houk K.N."/>
            <person name="Garg N.K."/>
            <person name="Tang Y."/>
        </authorList>
    </citation>
    <scope>FUNCTION</scope>
</reference>
<accession>A0A0A2IBN3</accession>
<organism>
    <name type="scientific">Penicillium expansum</name>
    <name type="common">Blue mold rot fungus</name>
    <dbReference type="NCBI Taxonomy" id="27334"/>
    <lineage>
        <taxon>Eukaryota</taxon>
        <taxon>Fungi</taxon>
        <taxon>Dikarya</taxon>
        <taxon>Ascomycota</taxon>
        <taxon>Pezizomycotina</taxon>
        <taxon>Eurotiomycetes</taxon>
        <taxon>Eurotiomycetidae</taxon>
        <taxon>Eurotiales</taxon>
        <taxon>Aspergillaceae</taxon>
        <taxon>Penicillium</taxon>
    </lineage>
</organism>
<gene>
    <name evidence="4" type="primary">cnsE</name>
    <name type="ORF">PEX2_055390</name>
</gene>
<proteinExistence type="evidence at protein level"/>